<comment type="function">
    <text evidence="1">Fur acts as a repressor, employing Fe(2+) as a cofactor to bind the operator of the iron transport operon.</text>
</comment>
<comment type="subunit">
    <text evidence="1">Homodimer.</text>
</comment>
<comment type="subcellular location">
    <subcellularLocation>
        <location evidence="1">Cytoplasm</location>
    </subcellularLocation>
</comment>
<comment type="similarity">
    <text evidence="2">Belongs to the Fur family.</text>
</comment>
<reference key="1">
    <citation type="journal article" date="2000" name="Nature">
        <title>DNA sequence of both chromosomes of the cholera pathogen Vibrio cholerae.</title>
        <authorList>
            <person name="Heidelberg J.F."/>
            <person name="Eisen J.A."/>
            <person name="Nelson W.C."/>
            <person name="Clayton R.A."/>
            <person name="Gwinn M.L."/>
            <person name="Dodson R.J."/>
            <person name="Haft D.H."/>
            <person name="Hickey E.K."/>
            <person name="Peterson J.D."/>
            <person name="Umayam L.A."/>
            <person name="Gill S.R."/>
            <person name="Nelson K.E."/>
            <person name="Read T.D."/>
            <person name="Tettelin H."/>
            <person name="Richardson D.L."/>
            <person name="Ermolaeva M.D."/>
            <person name="Vamathevan J.J."/>
            <person name="Bass S."/>
            <person name="Qin H."/>
            <person name="Dragoi I."/>
            <person name="Sellers P."/>
            <person name="McDonald L.A."/>
            <person name="Utterback T.R."/>
            <person name="Fleischmann R.D."/>
            <person name="Nierman W.C."/>
            <person name="White O."/>
            <person name="Salzberg S.L."/>
            <person name="Smith H.O."/>
            <person name="Colwell R.R."/>
            <person name="Mekalanos J.J."/>
            <person name="Venter J.C."/>
            <person name="Fraser C.M."/>
        </authorList>
    </citation>
    <scope>NUCLEOTIDE SEQUENCE [LARGE SCALE GENOMIC DNA]</scope>
    <source>
        <strain>ATCC 39315 / El Tor Inaba N16961</strain>
    </source>
</reference>
<accession>P0C6C8</accession>
<accession>P33087</accession>
<accession>Q9KQ94</accession>
<gene>
    <name type="primary">fur</name>
    <name type="ordered locus">VC_2106</name>
</gene>
<dbReference type="EMBL" id="AE003852">
    <property type="protein sequence ID" value="AAF95252.1"/>
    <property type="molecule type" value="Genomic_DNA"/>
</dbReference>
<dbReference type="PIR" id="A82118">
    <property type="entry name" value="A82118"/>
</dbReference>
<dbReference type="RefSeq" id="NP_231738.1">
    <property type="nucleotide sequence ID" value="NC_002505.1"/>
</dbReference>
<dbReference type="PDB" id="2W57">
    <property type="method" value="X-ray"/>
    <property type="resolution" value="2.60 A"/>
    <property type="chains" value="A/B=1-150"/>
</dbReference>
<dbReference type="PDBsum" id="2W57"/>
<dbReference type="SMR" id="P0C6C8"/>
<dbReference type="STRING" id="243277.VC_2106"/>
<dbReference type="DNASU" id="2613362"/>
<dbReference type="EnsemblBacteria" id="AAF95252">
    <property type="protein sequence ID" value="AAF95252"/>
    <property type="gene ID" value="VC_2106"/>
</dbReference>
<dbReference type="KEGG" id="vch:VC_2106"/>
<dbReference type="PATRIC" id="fig|243277.26.peg.2012"/>
<dbReference type="eggNOG" id="COG0735">
    <property type="taxonomic scope" value="Bacteria"/>
</dbReference>
<dbReference type="HOGENOM" id="CLU_096072_3_3_6"/>
<dbReference type="EvolutionaryTrace" id="P0C6C8"/>
<dbReference type="Proteomes" id="UP000000584">
    <property type="component" value="Chromosome 1"/>
</dbReference>
<dbReference type="CollecTF" id="EXPREG_000008b0"/>
<dbReference type="GO" id="GO:0005829">
    <property type="term" value="C:cytosol"/>
    <property type="evidence" value="ECO:0000318"/>
    <property type="project" value="GO_Central"/>
</dbReference>
<dbReference type="GO" id="GO:0003700">
    <property type="term" value="F:DNA-binding transcription factor activity"/>
    <property type="evidence" value="ECO:0000318"/>
    <property type="project" value="GO_Central"/>
</dbReference>
<dbReference type="GO" id="GO:0000976">
    <property type="term" value="F:transcription cis-regulatory region binding"/>
    <property type="evidence" value="ECO:0000318"/>
    <property type="project" value="GO_Central"/>
</dbReference>
<dbReference type="GO" id="GO:0008270">
    <property type="term" value="F:zinc ion binding"/>
    <property type="evidence" value="ECO:0000318"/>
    <property type="project" value="GO_Central"/>
</dbReference>
<dbReference type="GO" id="GO:0045892">
    <property type="term" value="P:negative regulation of DNA-templated transcription"/>
    <property type="evidence" value="ECO:0000318"/>
    <property type="project" value="GO_Central"/>
</dbReference>
<dbReference type="GO" id="GO:1900705">
    <property type="term" value="P:negative regulation of siderophore biosynthetic process"/>
    <property type="evidence" value="ECO:0000318"/>
    <property type="project" value="GO_Central"/>
</dbReference>
<dbReference type="CDD" id="cd07153">
    <property type="entry name" value="Fur_like"/>
    <property type="match status" value="1"/>
</dbReference>
<dbReference type="FunFam" id="1.10.10.10:FF:000007">
    <property type="entry name" value="Ferric uptake regulation protein"/>
    <property type="match status" value="1"/>
</dbReference>
<dbReference type="FunFam" id="3.30.1490.190:FF:000001">
    <property type="entry name" value="Ferric uptake regulation protein"/>
    <property type="match status" value="1"/>
</dbReference>
<dbReference type="Gene3D" id="3.30.1490.190">
    <property type="match status" value="1"/>
</dbReference>
<dbReference type="Gene3D" id="1.10.10.10">
    <property type="entry name" value="Winged helix-like DNA-binding domain superfamily/Winged helix DNA-binding domain"/>
    <property type="match status" value="1"/>
</dbReference>
<dbReference type="InterPro" id="IPR002481">
    <property type="entry name" value="FUR"/>
</dbReference>
<dbReference type="InterPro" id="IPR043135">
    <property type="entry name" value="Fur_C"/>
</dbReference>
<dbReference type="InterPro" id="IPR036388">
    <property type="entry name" value="WH-like_DNA-bd_sf"/>
</dbReference>
<dbReference type="InterPro" id="IPR036390">
    <property type="entry name" value="WH_DNA-bd_sf"/>
</dbReference>
<dbReference type="NCBIfam" id="NF006999">
    <property type="entry name" value="PRK09462.1"/>
    <property type="match status" value="1"/>
</dbReference>
<dbReference type="PANTHER" id="PTHR33202:SF2">
    <property type="entry name" value="FERRIC UPTAKE REGULATION PROTEIN"/>
    <property type="match status" value="1"/>
</dbReference>
<dbReference type="PANTHER" id="PTHR33202">
    <property type="entry name" value="ZINC UPTAKE REGULATION PROTEIN"/>
    <property type="match status" value="1"/>
</dbReference>
<dbReference type="Pfam" id="PF01475">
    <property type="entry name" value="FUR"/>
    <property type="match status" value="1"/>
</dbReference>
<dbReference type="SUPFAM" id="SSF46785">
    <property type="entry name" value="Winged helix' DNA-binding domain"/>
    <property type="match status" value="1"/>
</dbReference>
<evidence type="ECO:0000250" key="1"/>
<evidence type="ECO:0000305" key="2"/>
<evidence type="ECO:0007829" key="3">
    <source>
        <dbReference type="PDB" id="2W57"/>
    </source>
</evidence>
<sequence length="150" mass="16912">MSDNNQALKDAGLKVTLPRLKILEVLQQPECQHISAEELYKKLIDLGEEIGLATVYRVLNQFDDAGIVTRHHFEGGKSVFELSTQHHHDHLVCLDCGEVIEFSDDVIEQRQKEIAAKYNVQLTNHSLYLYGKCGSDGSCKDNPNAHKPKK</sequence>
<protein>
    <recommendedName>
        <fullName>Ferric uptake regulation protein</fullName>
        <shortName>Ferric uptake regulator</shortName>
    </recommendedName>
</protein>
<feature type="chain" id="PRO_0000095585" description="Ferric uptake regulation protein">
    <location>
        <begin position="1"/>
        <end position="150"/>
    </location>
</feature>
<feature type="region of interest" description="DNA-binding" evidence="1">
    <location>
        <begin position="1"/>
        <end position="84"/>
    </location>
</feature>
<feature type="region of interest" description="Dimerization" evidence="1">
    <location>
        <begin position="85"/>
        <end position="143"/>
    </location>
</feature>
<feature type="binding site" evidence="1">
    <location>
        <position position="33"/>
    </location>
    <ligand>
        <name>Zn(2+)</name>
        <dbReference type="ChEBI" id="CHEBI:29105"/>
    </ligand>
</feature>
<feature type="binding site" evidence="1">
    <location>
        <position position="81"/>
    </location>
    <ligand>
        <name>Zn(2+)</name>
        <dbReference type="ChEBI" id="CHEBI:29105"/>
    </ligand>
</feature>
<feature type="binding site" evidence="1">
    <location>
        <position position="87"/>
    </location>
    <ligand>
        <name>Fe cation</name>
        <dbReference type="ChEBI" id="CHEBI:24875"/>
    </ligand>
</feature>
<feature type="binding site" evidence="1">
    <location>
        <position position="89"/>
    </location>
    <ligand>
        <name>Fe cation</name>
        <dbReference type="ChEBI" id="CHEBI:24875"/>
    </ligand>
</feature>
<feature type="binding site" evidence="1">
    <location>
        <position position="90"/>
    </location>
    <ligand>
        <name>Zn(2+)</name>
        <dbReference type="ChEBI" id="CHEBI:29105"/>
    </ligand>
</feature>
<feature type="binding site" evidence="1">
    <location>
        <position position="93"/>
    </location>
    <ligand>
        <name>Zn(2+)</name>
        <dbReference type="ChEBI" id="CHEBI:29105"/>
    </ligand>
</feature>
<feature type="binding site" evidence="1">
    <location>
        <position position="96"/>
    </location>
    <ligand>
        <name>Zn(2+)</name>
        <dbReference type="ChEBI" id="CHEBI:29105"/>
    </ligand>
</feature>
<feature type="binding site" evidence="1">
    <location>
        <position position="101"/>
    </location>
    <ligand>
        <name>Zn(2+)</name>
        <dbReference type="ChEBI" id="CHEBI:29105"/>
    </ligand>
</feature>
<feature type="binding site" evidence="1">
    <location>
        <position position="108"/>
    </location>
    <ligand>
        <name>Fe cation</name>
        <dbReference type="ChEBI" id="CHEBI:24875"/>
    </ligand>
</feature>
<feature type="binding site" evidence="1">
    <location>
        <position position="125"/>
    </location>
    <ligand>
        <name>Fe cation</name>
        <dbReference type="ChEBI" id="CHEBI:24875"/>
    </ligand>
</feature>
<feature type="helix" evidence="3">
    <location>
        <begin position="4"/>
        <end position="10"/>
    </location>
</feature>
<feature type="helix" evidence="3">
    <location>
        <begin position="17"/>
        <end position="26"/>
    </location>
</feature>
<feature type="helix" evidence="3">
    <location>
        <begin position="29"/>
        <end position="31"/>
    </location>
</feature>
<feature type="strand" evidence="3">
    <location>
        <begin position="32"/>
        <end position="35"/>
    </location>
</feature>
<feature type="helix" evidence="3">
    <location>
        <begin position="36"/>
        <end position="45"/>
    </location>
</feature>
<feature type="helix" evidence="3">
    <location>
        <begin position="52"/>
        <end position="64"/>
    </location>
</feature>
<feature type="strand" evidence="3">
    <location>
        <begin position="67"/>
        <end position="72"/>
    </location>
</feature>
<feature type="helix" evidence="3">
    <location>
        <begin position="74"/>
        <end position="76"/>
    </location>
</feature>
<feature type="strand" evidence="3">
    <location>
        <begin position="78"/>
        <end position="82"/>
    </location>
</feature>
<feature type="strand" evidence="3">
    <location>
        <begin position="89"/>
        <end position="93"/>
    </location>
</feature>
<feature type="turn" evidence="3">
    <location>
        <begin position="94"/>
        <end position="96"/>
    </location>
</feature>
<feature type="strand" evidence="3">
    <location>
        <begin position="99"/>
        <end position="102"/>
    </location>
</feature>
<feature type="helix" evidence="3">
    <location>
        <begin position="105"/>
        <end position="117"/>
    </location>
</feature>
<feature type="strand" evidence="3">
    <location>
        <begin position="121"/>
        <end position="132"/>
    </location>
</feature>
<organism>
    <name type="scientific">Vibrio cholerae serotype O1 (strain ATCC 39315 / El Tor Inaba N16961)</name>
    <dbReference type="NCBI Taxonomy" id="243277"/>
    <lineage>
        <taxon>Bacteria</taxon>
        <taxon>Pseudomonadati</taxon>
        <taxon>Pseudomonadota</taxon>
        <taxon>Gammaproteobacteria</taxon>
        <taxon>Vibrionales</taxon>
        <taxon>Vibrionaceae</taxon>
        <taxon>Vibrio</taxon>
    </lineage>
</organism>
<keyword id="KW-0002">3D-structure</keyword>
<keyword id="KW-0963">Cytoplasm</keyword>
<keyword id="KW-0238">DNA-binding</keyword>
<keyword id="KW-0408">Iron</keyword>
<keyword id="KW-0479">Metal-binding</keyword>
<keyword id="KW-1185">Reference proteome</keyword>
<keyword id="KW-0678">Repressor</keyword>
<keyword id="KW-0804">Transcription</keyword>
<keyword id="KW-0805">Transcription regulation</keyword>
<keyword id="KW-0862">Zinc</keyword>
<name>FUR_VIBCH</name>
<proteinExistence type="evidence at protein level"/>